<gene>
    <name type="primary">ssb</name>
</gene>
<dbReference type="PIR" id="B38487">
    <property type="entry name" value="B38487"/>
</dbReference>
<dbReference type="PDB" id="3Q8D">
    <property type="method" value="X-ray"/>
    <property type="resolution" value="2.30 A"/>
    <property type="chains" value="E/F=168-175"/>
</dbReference>
<dbReference type="PDB" id="8TFU">
    <property type="method" value="X-ray"/>
    <property type="resolution" value="1.48 A"/>
    <property type="chains" value="C/D=166-175"/>
</dbReference>
<dbReference type="PDB" id="8TG7">
    <property type="method" value="X-ray"/>
    <property type="resolution" value="1.77 A"/>
    <property type="chains" value="C/D=166-175"/>
</dbReference>
<dbReference type="PDB" id="8TGC">
    <property type="method" value="X-ray"/>
    <property type="resolution" value="1.48 A"/>
    <property type="chains" value="C/D=166-175"/>
</dbReference>
<dbReference type="PDBsum" id="3Q8D"/>
<dbReference type="PDBsum" id="8TFU"/>
<dbReference type="PDBsum" id="8TG7"/>
<dbReference type="PDBsum" id="8TGC"/>
<dbReference type="SMR" id="P28044"/>
<dbReference type="GO" id="GO:0009295">
    <property type="term" value="C:nucleoid"/>
    <property type="evidence" value="ECO:0007669"/>
    <property type="project" value="TreeGrafter"/>
</dbReference>
<dbReference type="GO" id="GO:0003697">
    <property type="term" value="F:single-stranded DNA binding"/>
    <property type="evidence" value="ECO:0007669"/>
    <property type="project" value="UniProtKB-UniRule"/>
</dbReference>
<dbReference type="GO" id="GO:0006310">
    <property type="term" value="P:DNA recombination"/>
    <property type="evidence" value="ECO:0007669"/>
    <property type="project" value="UniProtKB-UniRule"/>
</dbReference>
<dbReference type="GO" id="GO:0006281">
    <property type="term" value="P:DNA repair"/>
    <property type="evidence" value="ECO:0007669"/>
    <property type="project" value="UniProtKB-UniRule"/>
</dbReference>
<dbReference type="GO" id="GO:0006260">
    <property type="term" value="P:DNA replication"/>
    <property type="evidence" value="ECO:0007669"/>
    <property type="project" value="UniProtKB-UniRule"/>
</dbReference>
<dbReference type="CDD" id="cd04496">
    <property type="entry name" value="SSB_OBF"/>
    <property type="match status" value="1"/>
</dbReference>
<dbReference type="Gene3D" id="2.40.50.140">
    <property type="entry name" value="Nucleic acid-binding proteins"/>
    <property type="match status" value="1"/>
</dbReference>
<dbReference type="HAMAP" id="MF_00984">
    <property type="entry name" value="SSB"/>
    <property type="match status" value="1"/>
</dbReference>
<dbReference type="InterPro" id="IPR012340">
    <property type="entry name" value="NA-bd_OB-fold"/>
</dbReference>
<dbReference type="InterPro" id="IPR000424">
    <property type="entry name" value="Primosome_PriB/ssb"/>
</dbReference>
<dbReference type="InterPro" id="IPR011344">
    <property type="entry name" value="ssDNA-bd"/>
</dbReference>
<dbReference type="NCBIfam" id="NF010292">
    <property type="entry name" value="PRK13732.1"/>
    <property type="match status" value="1"/>
</dbReference>
<dbReference type="NCBIfam" id="TIGR00621">
    <property type="entry name" value="ssb"/>
    <property type="match status" value="1"/>
</dbReference>
<dbReference type="PANTHER" id="PTHR10302">
    <property type="entry name" value="SINGLE-STRANDED DNA-BINDING PROTEIN"/>
    <property type="match status" value="1"/>
</dbReference>
<dbReference type="PANTHER" id="PTHR10302:SF27">
    <property type="entry name" value="SINGLE-STRANDED DNA-BINDING PROTEIN"/>
    <property type="match status" value="1"/>
</dbReference>
<dbReference type="Pfam" id="PF00436">
    <property type="entry name" value="SSB"/>
    <property type="match status" value="1"/>
</dbReference>
<dbReference type="SUPFAM" id="SSF50249">
    <property type="entry name" value="Nucleic acid-binding proteins"/>
    <property type="match status" value="1"/>
</dbReference>
<dbReference type="PROSITE" id="PS50935">
    <property type="entry name" value="SSB"/>
    <property type="match status" value="1"/>
</dbReference>
<comment type="function">
    <text evidence="4">May contribute to the conjugative processing of DNA. It has a functional relationship with Psi (plasmid-mediated sos inhibition) proteins.</text>
</comment>
<comment type="subunit">
    <text evidence="2">Homotetramer.</text>
</comment>
<accession>P28044</accession>
<name>SSB7_ECOLX</name>
<sequence>MAVRGINKVILVGRLGKDPEVRYIPNGGAVANLQVATSESWRDKQTGEIREQTEWHRVVLFGKLAEVAGEYLRKGAQVYIEGQLRTRSWEDNGITRYVTEILVKTTGTMQMLGRAAGTQTQPEEAQQFSGQPQPESQPEPKKGGAKTKGRERKAAQPEPRQPSEPAYDFDDDIPF</sequence>
<organism>
    <name type="scientific">Escherichia coli</name>
    <dbReference type="NCBI Taxonomy" id="562"/>
    <lineage>
        <taxon>Bacteria</taxon>
        <taxon>Pseudomonadati</taxon>
        <taxon>Pseudomonadota</taxon>
        <taxon>Gammaproteobacteria</taxon>
        <taxon>Enterobacterales</taxon>
        <taxon>Enterobacteriaceae</taxon>
        <taxon>Escherichia</taxon>
    </lineage>
</organism>
<proteinExistence type="evidence at protein level"/>
<protein>
    <recommendedName>
        <fullName>Plasmid-derived single-stranded DNA-binding protein</fullName>
        <shortName evidence="2">SSB</shortName>
    </recommendedName>
    <alternativeName>
        <fullName>Helix-destabilizing protein</fullName>
    </alternativeName>
</protein>
<keyword id="KW-0002">3D-structure</keyword>
<keyword id="KW-0227">DNA damage</keyword>
<keyword id="KW-0233">DNA recombination</keyword>
<keyword id="KW-0234">DNA repair</keyword>
<keyword id="KW-0235">DNA replication</keyword>
<keyword id="KW-0238">DNA-binding</keyword>
<keyword id="KW-0614">Plasmid</keyword>
<geneLocation type="plasmid">
    <name>pLP71a</name>
</geneLocation>
<reference key="1">
    <citation type="journal article" date="1991" name="Proteins">
        <title>Single-stranded DNA binding proteins (SSBs) from prokaryotic transmissible plasmids.</title>
        <authorList>
            <person name="Ruvolo P.P."/>
            <person name="Keating K.M."/>
            <person name="Williams K.R."/>
            <person name="Chase J.W."/>
        </authorList>
    </citation>
    <scope>NUCLEOTIDE SEQUENCE [GENOMIC DNA]</scope>
    <scope>FUNCTION</scope>
</reference>
<feature type="initiator methionine" description="Removed" evidence="1">
    <location>
        <position position="1"/>
    </location>
</feature>
<feature type="chain" id="PRO_0000096041" description="Plasmid-derived single-stranded DNA-binding protein">
    <location>
        <begin position="2"/>
        <end position="175"/>
    </location>
</feature>
<feature type="domain" description="SSB" evidence="2">
    <location>
        <begin position="6"/>
        <end position="110"/>
    </location>
</feature>
<feature type="DNA-binding region" evidence="2">
    <location>
        <begin position="55"/>
        <end position="61"/>
    </location>
</feature>
<feature type="region of interest" description="Disordered" evidence="3">
    <location>
        <begin position="113"/>
        <end position="175"/>
    </location>
</feature>
<feature type="short sequence motif" description="Important for interaction with partner proteins" evidence="2">
    <location>
        <begin position="170"/>
        <end position="175"/>
    </location>
</feature>
<feature type="compositionally biased region" description="Low complexity" evidence="3">
    <location>
        <begin position="126"/>
        <end position="136"/>
    </location>
</feature>
<evidence type="ECO:0000250" key="1"/>
<evidence type="ECO:0000255" key="2">
    <source>
        <dbReference type="HAMAP-Rule" id="MF_00984"/>
    </source>
</evidence>
<evidence type="ECO:0000256" key="3">
    <source>
        <dbReference type="SAM" id="MobiDB-lite"/>
    </source>
</evidence>
<evidence type="ECO:0000269" key="4">
    <source>
    </source>
</evidence>